<evidence type="ECO:0000250" key="1">
    <source>
        <dbReference type="UniProtKB" id="Q96S15"/>
    </source>
</evidence>
<evidence type="ECO:0000305" key="2"/>
<evidence type="ECO:0000312" key="3">
    <source>
        <dbReference type="EMBL" id="CAG30934.1"/>
    </source>
</evidence>
<proteinExistence type="evidence at transcript level"/>
<name>WDR24_CHICK</name>
<organism>
    <name type="scientific">Gallus gallus</name>
    <name type="common">Chicken</name>
    <dbReference type="NCBI Taxonomy" id="9031"/>
    <lineage>
        <taxon>Eukaryota</taxon>
        <taxon>Metazoa</taxon>
        <taxon>Chordata</taxon>
        <taxon>Craniata</taxon>
        <taxon>Vertebrata</taxon>
        <taxon>Euteleostomi</taxon>
        <taxon>Archelosauria</taxon>
        <taxon>Archosauria</taxon>
        <taxon>Dinosauria</taxon>
        <taxon>Saurischia</taxon>
        <taxon>Theropoda</taxon>
        <taxon>Coelurosauria</taxon>
        <taxon>Aves</taxon>
        <taxon>Neognathae</taxon>
        <taxon>Galloanserae</taxon>
        <taxon>Galliformes</taxon>
        <taxon>Phasianidae</taxon>
        <taxon>Phasianinae</taxon>
        <taxon>Gallus</taxon>
    </lineage>
</organism>
<gene>
    <name evidence="1" type="primary">WDR24</name>
    <name evidence="3" type="ORF">RCJMB04_1a19</name>
</gene>
<feature type="chain" id="PRO_0000051377" description="GATOR2 complex protein WDR24">
    <location>
        <begin position="1"/>
        <end position="705"/>
    </location>
</feature>
<feature type="repeat" description="WD 1">
    <location>
        <begin position="1"/>
        <end position="28"/>
    </location>
</feature>
<feature type="repeat" description="WD 2">
    <location>
        <begin position="34"/>
        <end position="74"/>
    </location>
</feature>
<feature type="repeat" description="WD 3">
    <location>
        <begin position="77"/>
        <end position="117"/>
    </location>
</feature>
<feature type="repeat" description="WD 4">
    <location>
        <begin position="121"/>
        <end position="161"/>
    </location>
</feature>
<feature type="repeat" description="WD 5">
    <location>
        <begin position="165"/>
        <end position="207"/>
    </location>
</feature>
<feature type="repeat" description="WD 6">
    <location>
        <begin position="211"/>
        <end position="254"/>
    </location>
</feature>
<feature type="zinc finger region" description="C4-type" evidence="1">
    <location>
        <begin position="633"/>
        <end position="655"/>
    </location>
</feature>
<feature type="zinc finger region" description="RING-type; atypical" evidence="1">
    <location>
        <begin position="656"/>
        <end position="705"/>
    </location>
</feature>
<feature type="binding site" evidence="1">
    <location>
        <position position="634"/>
    </location>
    <ligand>
        <name>Zn(2+)</name>
        <dbReference type="ChEBI" id="CHEBI:29105"/>
        <label>1</label>
    </ligand>
</feature>
<feature type="binding site" evidence="1">
    <location>
        <position position="637"/>
    </location>
    <ligand>
        <name>Zn(2+)</name>
        <dbReference type="ChEBI" id="CHEBI:29105"/>
        <label>1</label>
    </ligand>
</feature>
<feature type="binding site" evidence="1">
    <location>
        <position position="648"/>
    </location>
    <ligand>
        <name>Zn(2+)</name>
        <dbReference type="ChEBI" id="CHEBI:29105"/>
        <label>1</label>
    </ligand>
</feature>
<feature type="binding site" evidence="1">
    <location>
        <position position="651"/>
    </location>
    <ligand>
        <name>Zn(2+)</name>
        <dbReference type="ChEBI" id="CHEBI:29105"/>
        <label>1</label>
    </ligand>
</feature>
<feature type="binding site" evidence="1">
    <location>
        <position position="658"/>
    </location>
    <ligand>
        <name>Zn(2+)</name>
        <dbReference type="ChEBI" id="CHEBI:29105"/>
        <label>2</label>
    </ligand>
</feature>
<feature type="binding site" evidence="1">
    <location>
        <position position="661"/>
    </location>
    <ligand>
        <name>Zn(2+)</name>
        <dbReference type="ChEBI" id="CHEBI:29105"/>
        <label>2</label>
    </ligand>
</feature>
<feature type="binding site" evidence="1">
    <location>
        <position position="672"/>
    </location>
    <ligand>
        <name>Zn(2+)</name>
        <dbReference type="ChEBI" id="CHEBI:29105"/>
        <label>3</label>
    </ligand>
</feature>
<feature type="binding site" evidence="1">
    <location>
        <position position="675"/>
    </location>
    <ligand>
        <name>Zn(2+)</name>
        <dbReference type="ChEBI" id="CHEBI:29105"/>
        <label>3</label>
    </ligand>
</feature>
<feature type="binding site" evidence="1">
    <location>
        <position position="677"/>
    </location>
    <ligand>
        <name>Zn(2+)</name>
        <dbReference type="ChEBI" id="CHEBI:29105"/>
        <label>4</label>
    </ligand>
</feature>
<feature type="binding site" evidence="1">
    <location>
        <position position="680"/>
    </location>
    <ligand>
        <name>Zn(2+)</name>
        <dbReference type="ChEBI" id="CHEBI:29105"/>
        <label>2</label>
    </ligand>
</feature>
<feature type="binding site" evidence="1">
    <location>
        <position position="683"/>
    </location>
    <ligand>
        <name>Zn(2+)</name>
        <dbReference type="ChEBI" id="CHEBI:29105"/>
        <label>2</label>
    </ligand>
</feature>
<feature type="binding site" evidence="1">
    <location>
        <position position="694"/>
    </location>
    <ligand>
        <name>Zn(2+)</name>
        <dbReference type="ChEBI" id="CHEBI:29105"/>
        <label>4</label>
    </ligand>
</feature>
<feature type="binding site" evidence="1">
    <location>
        <position position="698"/>
    </location>
    <ligand>
        <name>Zn(2+)</name>
        <dbReference type="ChEBI" id="CHEBI:29105"/>
        <label>4</label>
    </ligand>
</feature>
<feature type="binding site" evidence="1">
    <location>
        <position position="700"/>
    </location>
    <ligand>
        <name>Zn(2+)</name>
        <dbReference type="ChEBI" id="CHEBI:29105"/>
        <label>3</label>
    </ligand>
</feature>
<feature type="binding site" evidence="1">
    <location>
        <position position="702"/>
    </location>
    <ligand>
        <name>Zn(2+)</name>
        <dbReference type="ChEBI" id="CHEBI:29105"/>
        <label>3</label>
    </ligand>
</feature>
<comment type="function">
    <text evidence="1">Catalytic component of the GATOR2 complex, a multiprotein complex that acts as an activator of the amino acid-sensing branch of the mTORC1 signaling pathway. The GATOR2 complex indirectly activates mTORC1 through the inhibition of the GATOR1 subcomplex. GATOR2 probably acts as an E3 ubiquitin-protein ligase toward GATOR1. In the presence of abundant amino acids, the GATOR2 complex mediates ubiquitination of the NPRL2 core component of the GATOR1 complex, leading to GATOR1 inactivation. In the absence of amino acids, GATOR2 is inhibited, activating the GATOR1 complex. In addition to its role in regulation of the mTORC1 complex, promotes the acidification of lysosomes and facilitates autophagic flux. Within the GATOR2 complex, WDR24 constitutes the catalytic subunit that mediates 'Lys-6'-linked ubiquitination of NPRL2.</text>
</comment>
<comment type="catalytic activity">
    <reaction evidence="1">
        <text>S-ubiquitinyl-[E2 ubiquitin-conjugating enzyme]-L-cysteine + [acceptor protein]-L-lysine = [E2 ubiquitin-conjugating enzyme]-L-cysteine + N(6)-ubiquitinyl-[acceptor protein]-L-lysine.</text>
        <dbReference type="EC" id="2.3.2.27"/>
    </reaction>
</comment>
<comment type="activity regulation">
    <text evidence="1">The GATOR2 complex is negatively regulated by the upstream amino acid sensors CASTOR1 and SESN2, which sequester the GATOR2 complex in absence of amino acids. In the presence of abundant amino acids, GATOR2 is released from CASTOR1 and SESN2 and activated.</text>
</comment>
<comment type="pathway">
    <text evidence="1">Protein modification; protein ubiquitination.</text>
</comment>
<comment type="subunit">
    <text evidence="1">Component of the GATOR2 subcomplex, composed of MIOS, SEC13, SEH1L, WDR24 and WDR59. The GATOR2 complex interacts with CASTOR1 and CASTOR2; the interaction is negatively regulated by arginine. The GATOR2 complex interacts with SESN1, SESN2 and SESN3; the interaction is negatively regulated by amino acids.</text>
</comment>
<comment type="subcellular location">
    <subcellularLocation>
        <location evidence="1">Lysosome membrane</location>
    </subcellularLocation>
</comment>
<comment type="similarity">
    <text evidence="2">Belongs to the WD repeat WDR24 family.</text>
</comment>
<protein>
    <recommendedName>
        <fullName evidence="2">GATOR2 complex protein WDR24</fullName>
        <ecNumber evidence="1">2.3.2.27</ecNumber>
    </recommendedName>
</protein>
<dbReference type="EC" id="2.3.2.27" evidence="1"/>
<dbReference type="EMBL" id="AJ719275">
    <property type="protein sequence ID" value="CAG30934.1"/>
    <property type="molecule type" value="mRNA"/>
</dbReference>
<dbReference type="RefSeq" id="NP_001025799.1">
    <property type="nucleotide sequence ID" value="NM_001030628.2"/>
</dbReference>
<dbReference type="SMR" id="Q5ZMV9"/>
<dbReference type="FunCoup" id="Q5ZMV9">
    <property type="interactions" value="1656"/>
</dbReference>
<dbReference type="STRING" id="9031.ENSGALP00000070433"/>
<dbReference type="PaxDb" id="9031-ENSGALP00000003853"/>
<dbReference type="GeneID" id="416406"/>
<dbReference type="KEGG" id="gga:416406"/>
<dbReference type="CTD" id="84219"/>
<dbReference type="VEuPathDB" id="HostDB:geneid_416406"/>
<dbReference type="eggNOG" id="KOG0269">
    <property type="taxonomic scope" value="Eukaryota"/>
</dbReference>
<dbReference type="HOGENOM" id="CLU_010233_0_0_1"/>
<dbReference type="InParanoid" id="Q5ZMV9"/>
<dbReference type="OrthoDB" id="60955at2759"/>
<dbReference type="PhylomeDB" id="Q5ZMV9"/>
<dbReference type="TreeFam" id="TF314190"/>
<dbReference type="Reactome" id="R-GGA-9639288">
    <property type="pathway name" value="Amino acids regulate mTORC1"/>
</dbReference>
<dbReference type="UniPathway" id="UPA00143"/>
<dbReference type="PRO" id="PR:Q5ZMV9"/>
<dbReference type="Proteomes" id="UP000000539">
    <property type="component" value="Chromosome 14"/>
</dbReference>
<dbReference type="Bgee" id="ENSGALG00000002450">
    <property type="expression patterns" value="Expressed in cerebellum and 12 other cell types or tissues"/>
</dbReference>
<dbReference type="GO" id="GO:0005829">
    <property type="term" value="C:cytosol"/>
    <property type="evidence" value="ECO:0000318"/>
    <property type="project" value="GO_Central"/>
</dbReference>
<dbReference type="GO" id="GO:0061700">
    <property type="term" value="C:GATOR2 complex"/>
    <property type="evidence" value="ECO:0000250"/>
    <property type="project" value="UniProtKB"/>
</dbReference>
<dbReference type="GO" id="GO:0005765">
    <property type="term" value="C:lysosomal membrane"/>
    <property type="evidence" value="ECO:0000250"/>
    <property type="project" value="UniProtKB"/>
</dbReference>
<dbReference type="GO" id="GO:0005774">
    <property type="term" value="C:vacuolar membrane"/>
    <property type="evidence" value="ECO:0000318"/>
    <property type="project" value="GO_Central"/>
</dbReference>
<dbReference type="GO" id="GO:0061630">
    <property type="term" value="F:ubiquitin protein ligase activity"/>
    <property type="evidence" value="ECO:0000250"/>
    <property type="project" value="UniProtKB"/>
</dbReference>
<dbReference type="GO" id="GO:0008270">
    <property type="term" value="F:zinc ion binding"/>
    <property type="evidence" value="ECO:0007669"/>
    <property type="project" value="UniProtKB-KW"/>
</dbReference>
<dbReference type="GO" id="GO:0006914">
    <property type="term" value="P:autophagy"/>
    <property type="evidence" value="ECO:0007669"/>
    <property type="project" value="UniProtKB-KW"/>
</dbReference>
<dbReference type="GO" id="GO:0034198">
    <property type="term" value="P:cellular response to amino acid starvation"/>
    <property type="evidence" value="ECO:0000318"/>
    <property type="project" value="GO_Central"/>
</dbReference>
<dbReference type="GO" id="GO:0031669">
    <property type="term" value="P:cellular response to nutrient levels"/>
    <property type="evidence" value="ECO:0000250"/>
    <property type="project" value="UniProtKB"/>
</dbReference>
<dbReference type="GO" id="GO:0016239">
    <property type="term" value="P:positive regulation of macroautophagy"/>
    <property type="evidence" value="ECO:0000318"/>
    <property type="project" value="GO_Central"/>
</dbReference>
<dbReference type="GO" id="GO:1904263">
    <property type="term" value="P:positive regulation of TORC1 signaling"/>
    <property type="evidence" value="ECO:0000250"/>
    <property type="project" value="UniProtKB"/>
</dbReference>
<dbReference type="GO" id="GO:0085020">
    <property type="term" value="P:protein K6-linked ubiquitination"/>
    <property type="evidence" value="ECO:0000250"/>
    <property type="project" value="UniProtKB"/>
</dbReference>
<dbReference type="CDD" id="cd16693">
    <property type="entry name" value="mRING-H2-C3H3C2_WDR24"/>
    <property type="match status" value="1"/>
</dbReference>
<dbReference type="Gene3D" id="2.130.10.10">
    <property type="entry name" value="YVTN repeat-like/Quinoprotein amine dehydrogenase"/>
    <property type="match status" value="1"/>
</dbReference>
<dbReference type="InterPro" id="IPR015943">
    <property type="entry name" value="WD40/YVTN_repeat-like_dom_sf"/>
</dbReference>
<dbReference type="InterPro" id="IPR019775">
    <property type="entry name" value="WD40_repeat_CS"/>
</dbReference>
<dbReference type="InterPro" id="IPR036322">
    <property type="entry name" value="WD40_repeat_dom_sf"/>
</dbReference>
<dbReference type="InterPro" id="IPR001680">
    <property type="entry name" value="WD40_rpt"/>
</dbReference>
<dbReference type="InterPro" id="IPR037590">
    <property type="entry name" value="WDR24"/>
</dbReference>
<dbReference type="PANTHER" id="PTHR46200">
    <property type="entry name" value="GATOR COMPLEX PROTEIN WDR24"/>
    <property type="match status" value="1"/>
</dbReference>
<dbReference type="PANTHER" id="PTHR46200:SF1">
    <property type="entry name" value="GATOR COMPLEX PROTEIN WDR24"/>
    <property type="match status" value="1"/>
</dbReference>
<dbReference type="Pfam" id="PF00400">
    <property type="entry name" value="WD40"/>
    <property type="match status" value="3"/>
</dbReference>
<dbReference type="SMART" id="SM00320">
    <property type="entry name" value="WD40"/>
    <property type="match status" value="5"/>
</dbReference>
<dbReference type="SUPFAM" id="SSF50978">
    <property type="entry name" value="WD40 repeat-like"/>
    <property type="match status" value="1"/>
</dbReference>
<dbReference type="PROSITE" id="PS00678">
    <property type="entry name" value="WD_REPEATS_1"/>
    <property type="match status" value="3"/>
</dbReference>
<dbReference type="PROSITE" id="PS50082">
    <property type="entry name" value="WD_REPEATS_2"/>
    <property type="match status" value="2"/>
</dbReference>
<dbReference type="PROSITE" id="PS50294">
    <property type="entry name" value="WD_REPEATS_REGION"/>
    <property type="match status" value="1"/>
</dbReference>
<accession>Q5ZMV9</accession>
<sequence length="705" mass="80210">MDENLLATAATNGVVVTWNLGKPSRNKQDQLFTEHKRTVNKVCFHPTEVYMLLSGSQDGYMKCFDLRKKDSVSTFSGQSESVRDVQFSIRDYFTFAATFENGNVQLWDIRRPDRYERMFTAHNGPVFCCDWHPEDRGWLATGGRDKMVKVWDMNTTRAKEIYCVQTIASVARVKWRPECKHHIATCSMMVDHNIYVWDVRRPFIPSAMFEEHKDVTTGIVWRHLHDPYFLLSGSKDSTLYQHIFKDASQPIDRANPEGLCYSLYGDLAFAAKESLISSDSNRKPYIGDRRHPIFFKRKLDPTEQFEYISSSSALSVFETDVESGSMDWFVHTAKQYALAGRPLAELCDHNAKVAKGLDRNQVAQTWTMLRIIYSSLGTVSSTNLNHSMGKGSTTLPLMNSFNLKDIPSGLGSESRLDRSKGESRTENILMDSSSTLINNEDNEETEGSDVPADYLLGDVEADEDDLYMMDHENPHAEEQEYSLPQEAFPLRHEIVDNPSALDHLQDKADSPHVSGNEAETVSLTPVESFSLISISHSLYENRLPSDFFNPIVRDTLLFYAEQGDVQTAVSVLIVLGDRIRKEIDEQTQEHWYTSYIDLLQRFQLWNISNEVIKLSTCRAINCLNQASTTLHINCSNCKRPMSNRGWICDRCRQCASMCAVCHHVVKGLFVWCQGCSHGGHLQHIMKWLETSSHCPAGCGHLCEYT</sequence>
<keyword id="KW-0072">Autophagy</keyword>
<keyword id="KW-0458">Lysosome</keyword>
<keyword id="KW-0472">Membrane</keyword>
<keyword id="KW-0479">Metal-binding</keyword>
<keyword id="KW-1185">Reference proteome</keyword>
<keyword id="KW-0677">Repeat</keyword>
<keyword id="KW-0808">Transferase</keyword>
<keyword id="KW-0833">Ubl conjugation pathway</keyword>
<keyword id="KW-0853">WD repeat</keyword>
<keyword id="KW-0862">Zinc</keyword>
<keyword id="KW-0863">Zinc-finger</keyword>
<reference key="1">
    <citation type="journal article" date="2005" name="Genome Biol.">
        <title>Full-length cDNAs from chicken bursal lymphocytes to facilitate gene function analysis.</title>
        <authorList>
            <person name="Caldwell R.B."/>
            <person name="Kierzek A.M."/>
            <person name="Arakawa H."/>
            <person name="Bezzubov Y."/>
            <person name="Zaim J."/>
            <person name="Fiedler P."/>
            <person name="Kutter S."/>
            <person name="Blagodatski A."/>
            <person name="Kostovska D."/>
            <person name="Koter M."/>
            <person name="Plachy J."/>
            <person name="Carninci P."/>
            <person name="Hayashizaki Y."/>
            <person name="Buerstedde J.-M."/>
        </authorList>
    </citation>
    <scope>NUCLEOTIDE SEQUENCE [LARGE SCALE MRNA]</scope>
    <source>
        <strain>CB</strain>
        <tissue>Bursa of Fabricius</tissue>
    </source>
</reference>